<name>PAFA_NOCFA</name>
<comment type="function">
    <text evidence="1">Catalyzes the covalent attachment of the prokaryotic ubiquitin-like protein modifier Pup to the proteasomal substrate proteins, thereby targeting them for proteasomal degradation. This tagging system is termed pupylation. The ligation reaction involves the side-chain carboxylate of the C-terminal glutamate of Pup and the side-chain amino group of a substrate lysine.</text>
</comment>
<comment type="catalytic activity">
    <reaction evidence="1">
        <text>ATP + [prokaryotic ubiquitin-like protein]-L-glutamate + [protein]-L-lysine = ADP + phosphate + N(6)-([prokaryotic ubiquitin-like protein]-gamma-L-glutamyl)-[protein]-L-lysine.</text>
        <dbReference type="EC" id="6.3.1.19"/>
    </reaction>
</comment>
<comment type="pathway">
    <text evidence="1">Protein degradation; proteasomal Pup-dependent pathway.</text>
</comment>
<comment type="pathway">
    <text evidence="1">Protein modification; protein pupylation.</text>
</comment>
<comment type="miscellaneous">
    <text evidence="1">The reaction mechanism probably proceeds via the activation of Pup by phosphorylation of its C-terminal glutamate, which is then subject to nucleophilic attack by the substrate lysine, resulting in an isopeptide bond and the release of phosphate as a good leaving group.</text>
</comment>
<comment type="similarity">
    <text evidence="1">Belongs to the Pup ligase/Pup deamidase family. Pup-conjugating enzyme subfamily.</text>
</comment>
<comment type="sequence caution" evidence="2">
    <conflict type="erroneous initiation">
        <sequence resource="EMBL-CDS" id="BAD58017"/>
    </conflict>
    <text>Truncated N-terminus.</text>
</comment>
<protein>
    <recommendedName>
        <fullName evidence="1">Pup--protein ligase</fullName>
        <ecNumber evidence="1">6.3.1.19</ecNumber>
    </recommendedName>
    <alternativeName>
        <fullName evidence="1">Proteasome accessory factor A</fullName>
    </alternativeName>
    <alternativeName>
        <fullName evidence="1">Pup-conjugating enzyme</fullName>
    </alternativeName>
</protein>
<organism>
    <name type="scientific">Nocardia farcinica (strain IFM 10152)</name>
    <dbReference type="NCBI Taxonomy" id="247156"/>
    <lineage>
        <taxon>Bacteria</taxon>
        <taxon>Bacillati</taxon>
        <taxon>Actinomycetota</taxon>
        <taxon>Actinomycetes</taxon>
        <taxon>Mycobacteriales</taxon>
        <taxon>Nocardiaceae</taxon>
        <taxon>Nocardia</taxon>
    </lineage>
</organism>
<keyword id="KW-0067">ATP-binding</keyword>
<keyword id="KW-0436">Ligase</keyword>
<keyword id="KW-0460">Magnesium</keyword>
<keyword id="KW-0479">Metal-binding</keyword>
<keyword id="KW-0547">Nucleotide-binding</keyword>
<keyword id="KW-1185">Reference proteome</keyword>
<keyword id="KW-0833">Ubl conjugation pathway</keyword>
<evidence type="ECO:0000255" key="1">
    <source>
        <dbReference type="HAMAP-Rule" id="MF_02111"/>
    </source>
</evidence>
<evidence type="ECO:0000305" key="2"/>
<feature type="chain" id="PRO_0000395941" description="Pup--protein ligase">
    <location>
        <begin position="1"/>
        <end position="452"/>
    </location>
</feature>
<feature type="active site" description="Proton acceptor" evidence="1">
    <location>
        <position position="57"/>
    </location>
</feature>
<feature type="binding site" evidence="1">
    <location>
        <position position="9"/>
    </location>
    <ligand>
        <name>Mg(2+)</name>
        <dbReference type="ChEBI" id="CHEBI:18420"/>
    </ligand>
</feature>
<feature type="binding site" evidence="1">
    <location>
        <position position="53"/>
    </location>
    <ligand>
        <name>ATP</name>
        <dbReference type="ChEBI" id="CHEBI:30616"/>
    </ligand>
</feature>
<feature type="binding site" evidence="1">
    <location>
        <position position="55"/>
    </location>
    <ligand>
        <name>Mg(2+)</name>
        <dbReference type="ChEBI" id="CHEBI:18420"/>
    </ligand>
</feature>
<feature type="binding site" evidence="1">
    <location>
        <position position="63"/>
    </location>
    <ligand>
        <name>Mg(2+)</name>
        <dbReference type="ChEBI" id="CHEBI:18420"/>
    </ligand>
</feature>
<feature type="binding site" evidence="1">
    <location>
        <position position="66"/>
    </location>
    <ligand>
        <name>ATP</name>
        <dbReference type="ChEBI" id="CHEBI:30616"/>
    </ligand>
</feature>
<feature type="binding site" evidence="1">
    <location>
        <position position="419"/>
    </location>
    <ligand>
        <name>ATP</name>
        <dbReference type="ChEBI" id="CHEBI:30616"/>
    </ligand>
</feature>
<accession>Q5YUX4</accession>
<reference key="1">
    <citation type="journal article" date="2004" name="Proc. Natl. Acad. Sci. U.S.A.">
        <title>The complete genomic sequence of Nocardia farcinica IFM 10152.</title>
        <authorList>
            <person name="Ishikawa J."/>
            <person name="Yamashita A."/>
            <person name="Mikami Y."/>
            <person name="Hoshino Y."/>
            <person name="Kurita H."/>
            <person name="Hotta K."/>
            <person name="Shiba T."/>
            <person name="Hattori M."/>
        </authorList>
    </citation>
    <scope>NUCLEOTIDE SEQUENCE [LARGE SCALE GENOMIC DNA]</scope>
    <source>
        <strain>IFM 10152</strain>
    </source>
</reference>
<gene>
    <name evidence="1" type="primary">pafA</name>
    <name type="ordered locus">NFA_31700</name>
</gene>
<sequence>MQRRIMGIETEFGVTCTFHGHRRLSPDEVARYLFRRVVSWGRSSNVFLRNGARLYLDVGSHPEYATAECDSLHQLVTHDRAGERVLEELLIDAEQRLAEEGIGGDIYLFKNNTDSAGNSYGCHENFLVVRAGEFSRISDVLLPFLVTRQLICGAGKVLQTPKAATFCLSQRAEHIWEGVSSATTRSRPIINTRDEPHADAEKYRRLHVIVGDSNMSETTTMLKVGTAALVLEMIEAGVAFRDFALDNPIRAIREVSHDLTGRRPVRLAGGRQASALDIQREYYARAVEHLRNRDRDPQIDQVVDLWGRALDAVEAQDFAKVDTEIDWVIKRKLFQRYQDRYDMELSDPKIAQLDLAYHDIKRGRGVFDLLQRKGLAKRITEDEAVDAAVDTPPQTTRAKLRGDFITAAQEAGRDFTVDWVHLKLNDQAQRTVLCKDPFRSVDERVDRLIASM</sequence>
<dbReference type="EC" id="6.3.1.19" evidence="1"/>
<dbReference type="EMBL" id="AP006618">
    <property type="protein sequence ID" value="BAD58017.1"/>
    <property type="status" value="ALT_INIT"/>
    <property type="molecule type" value="Genomic_DNA"/>
</dbReference>
<dbReference type="SMR" id="Q5YUX4"/>
<dbReference type="STRING" id="247156.NFA_31700"/>
<dbReference type="KEGG" id="nfa:NFA_31700"/>
<dbReference type="eggNOG" id="COG0638">
    <property type="taxonomic scope" value="Bacteria"/>
</dbReference>
<dbReference type="HOGENOM" id="CLU_040524_0_1_11"/>
<dbReference type="OrthoDB" id="9760627at2"/>
<dbReference type="UniPathway" id="UPA00997"/>
<dbReference type="UniPathway" id="UPA00998"/>
<dbReference type="Proteomes" id="UP000006820">
    <property type="component" value="Chromosome"/>
</dbReference>
<dbReference type="GO" id="GO:0005524">
    <property type="term" value="F:ATP binding"/>
    <property type="evidence" value="ECO:0007669"/>
    <property type="project" value="UniProtKB-UniRule"/>
</dbReference>
<dbReference type="GO" id="GO:0016879">
    <property type="term" value="F:ligase activity, forming carbon-nitrogen bonds"/>
    <property type="evidence" value="ECO:0007669"/>
    <property type="project" value="InterPro"/>
</dbReference>
<dbReference type="GO" id="GO:0000287">
    <property type="term" value="F:magnesium ion binding"/>
    <property type="evidence" value="ECO:0007669"/>
    <property type="project" value="UniProtKB-UniRule"/>
</dbReference>
<dbReference type="GO" id="GO:0019787">
    <property type="term" value="F:ubiquitin-like protein transferase activity"/>
    <property type="evidence" value="ECO:0007669"/>
    <property type="project" value="UniProtKB-UniRule"/>
</dbReference>
<dbReference type="GO" id="GO:0019941">
    <property type="term" value="P:modification-dependent protein catabolic process"/>
    <property type="evidence" value="ECO:0007669"/>
    <property type="project" value="UniProtKB-UniRule"/>
</dbReference>
<dbReference type="GO" id="GO:0010498">
    <property type="term" value="P:proteasomal protein catabolic process"/>
    <property type="evidence" value="ECO:0007669"/>
    <property type="project" value="UniProtKB-UniRule"/>
</dbReference>
<dbReference type="GO" id="GO:0070490">
    <property type="term" value="P:protein pupylation"/>
    <property type="evidence" value="ECO:0007669"/>
    <property type="project" value="UniProtKB-UniRule"/>
</dbReference>
<dbReference type="HAMAP" id="MF_02111">
    <property type="entry name" value="Pup_ligase"/>
    <property type="match status" value="1"/>
</dbReference>
<dbReference type="InterPro" id="IPR022279">
    <property type="entry name" value="Pup_ligase"/>
</dbReference>
<dbReference type="InterPro" id="IPR004347">
    <property type="entry name" value="Pup_ligase/deamidase"/>
</dbReference>
<dbReference type="NCBIfam" id="TIGR03686">
    <property type="entry name" value="pupylate_PafA"/>
    <property type="match status" value="1"/>
</dbReference>
<dbReference type="PANTHER" id="PTHR42307">
    <property type="entry name" value="PUP DEAMIDASE/DEPUPYLASE"/>
    <property type="match status" value="1"/>
</dbReference>
<dbReference type="PANTHER" id="PTHR42307:SF3">
    <property type="entry name" value="PUP--PROTEIN LIGASE"/>
    <property type="match status" value="1"/>
</dbReference>
<dbReference type="Pfam" id="PF03136">
    <property type="entry name" value="Pup_ligase"/>
    <property type="match status" value="1"/>
</dbReference>
<dbReference type="PIRSF" id="PIRSF018077">
    <property type="entry name" value="UCP018077"/>
    <property type="match status" value="1"/>
</dbReference>
<proteinExistence type="inferred from homology"/>